<reference key="1">
    <citation type="journal article" date="1990" name="J. Biol. Chem.">
        <title>The Saccharomyces cerevisiae INO4 gene encodes a small, highly basic protein required for derepression of phospholipid biosynthetic enzymes.</title>
        <authorList>
            <person name="Hoshizaki D.K."/>
            <person name="Hill J.E."/>
            <person name="Henry S.A."/>
        </authorList>
    </citation>
    <scope>NUCLEOTIDE SEQUENCE [GENOMIC DNA]</scope>
</reference>
<reference key="2">
    <citation type="journal article" date="1995" name="Yeast">
        <title>Sequence analysis of a 44 kb DNA fragment of yeast chromosome XV including the Ty1-H3 retrotransposon, the suf1(+) frameshift suppressor gene for tRNA-Gly, the yeast transfer RNA-Thr-1a and a delta element.</title>
        <authorList>
            <person name="Vandenbol M."/>
            <person name="Durand P."/>
            <person name="Portetelle D."/>
            <person name="Hilger F."/>
        </authorList>
    </citation>
    <scope>NUCLEOTIDE SEQUENCE [GENOMIC DNA]</scope>
</reference>
<reference key="3">
    <citation type="journal article" date="1997" name="Nature">
        <title>The nucleotide sequence of Saccharomyces cerevisiae chromosome XV.</title>
        <authorList>
            <person name="Dujon B."/>
            <person name="Albermann K."/>
            <person name="Aldea M."/>
            <person name="Alexandraki D."/>
            <person name="Ansorge W."/>
            <person name="Arino J."/>
            <person name="Benes V."/>
            <person name="Bohn C."/>
            <person name="Bolotin-Fukuhara M."/>
            <person name="Bordonne R."/>
            <person name="Boyer J."/>
            <person name="Camasses A."/>
            <person name="Casamayor A."/>
            <person name="Casas C."/>
            <person name="Cheret G."/>
            <person name="Cziepluch C."/>
            <person name="Daignan-Fornier B."/>
            <person name="Dang V.-D."/>
            <person name="de Haan M."/>
            <person name="Delius H."/>
            <person name="Durand P."/>
            <person name="Fairhead C."/>
            <person name="Feldmann H."/>
            <person name="Gaillon L."/>
            <person name="Galisson F."/>
            <person name="Gamo F.-J."/>
            <person name="Gancedo C."/>
            <person name="Goffeau A."/>
            <person name="Goulding S.E."/>
            <person name="Grivell L.A."/>
            <person name="Habbig B."/>
            <person name="Hand N.J."/>
            <person name="Hani J."/>
            <person name="Hattenhorst U."/>
            <person name="Hebling U."/>
            <person name="Hernando Y."/>
            <person name="Herrero E."/>
            <person name="Heumann K."/>
            <person name="Hiesel R."/>
            <person name="Hilger F."/>
            <person name="Hofmann B."/>
            <person name="Hollenberg C.P."/>
            <person name="Hughes B."/>
            <person name="Jauniaux J.-C."/>
            <person name="Kalogeropoulos A."/>
            <person name="Katsoulou C."/>
            <person name="Kordes E."/>
            <person name="Lafuente M.J."/>
            <person name="Landt O."/>
            <person name="Louis E.J."/>
            <person name="Maarse A.C."/>
            <person name="Madania A."/>
            <person name="Mannhaupt G."/>
            <person name="Marck C."/>
            <person name="Martin R.P."/>
            <person name="Mewes H.-W."/>
            <person name="Michaux G."/>
            <person name="Paces V."/>
            <person name="Parle-McDermott A.G."/>
            <person name="Pearson B.M."/>
            <person name="Perrin A."/>
            <person name="Pettersson B."/>
            <person name="Poch O."/>
            <person name="Pohl T.M."/>
            <person name="Poirey R."/>
            <person name="Portetelle D."/>
            <person name="Pujol A."/>
            <person name="Purnelle B."/>
            <person name="Ramezani Rad M."/>
            <person name="Rechmann S."/>
            <person name="Schwager C."/>
            <person name="Schweizer M."/>
            <person name="Sor F."/>
            <person name="Sterky F."/>
            <person name="Tarassov I.A."/>
            <person name="Teodoru C."/>
            <person name="Tettelin H."/>
            <person name="Thierry A."/>
            <person name="Tobiasch E."/>
            <person name="Tzermia M."/>
            <person name="Uhlen M."/>
            <person name="Unseld M."/>
            <person name="Valens M."/>
            <person name="Vandenbol M."/>
            <person name="Vetter I."/>
            <person name="Vlcek C."/>
            <person name="Voet M."/>
            <person name="Volckaert G."/>
            <person name="Voss H."/>
            <person name="Wambutt R."/>
            <person name="Wedler H."/>
            <person name="Wiemann S."/>
            <person name="Winsor B."/>
            <person name="Wolfe K.H."/>
            <person name="Zollner A."/>
            <person name="Zumstein E."/>
            <person name="Kleine K."/>
        </authorList>
    </citation>
    <scope>NUCLEOTIDE SEQUENCE [LARGE SCALE GENOMIC DNA]</scope>
    <source>
        <strain>ATCC 204508 / S288c</strain>
    </source>
</reference>
<reference key="4">
    <citation type="journal article" date="2014" name="G3 (Bethesda)">
        <title>The reference genome sequence of Saccharomyces cerevisiae: Then and now.</title>
        <authorList>
            <person name="Engel S.R."/>
            <person name="Dietrich F.S."/>
            <person name="Fisk D.G."/>
            <person name="Binkley G."/>
            <person name="Balakrishnan R."/>
            <person name="Costanzo M.C."/>
            <person name="Dwight S.S."/>
            <person name="Hitz B.C."/>
            <person name="Karra K."/>
            <person name="Nash R.S."/>
            <person name="Weng S."/>
            <person name="Wong E.D."/>
            <person name="Lloyd P."/>
            <person name="Skrzypek M.S."/>
            <person name="Miyasato S.R."/>
            <person name="Simison M."/>
            <person name="Cherry J.M."/>
        </authorList>
    </citation>
    <scope>GENOME REANNOTATION</scope>
    <source>
        <strain>ATCC 204508 / S288c</strain>
    </source>
</reference>
<reference key="5">
    <citation type="journal article" date="2007" name="Genome Res.">
        <title>Approaching a complete repository of sequence-verified protein-encoding clones for Saccharomyces cerevisiae.</title>
        <authorList>
            <person name="Hu Y."/>
            <person name="Rolfs A."/>
            <person name="Bhullar B."/>
            <person name="Murthy T.V.S."/>
            <person name="Zhu C."/>
            <person name="Berger M.F."/>
            <person name="Camargo A.A."/>
            <person name="Kelley F."/>
            <person name="McCarron S."/>
            <person name="Jepson D."/>
            <person name="Richardson A."/>
            <person name="Raphael J."/>
            <person name="Moreira D."/>
            <person name="Taycher E."/>
            <person name="Zuo D."/>
            <person name="Mohr S."/>
            <person name="Kane M.F."/>
            <person name="Williamson J."/>
            <person name="Simpson A.J.G."/>
            <person name="Bulyk M.L."/>
            <person name="Harlow E."/>
            <person name="Marsischky G."/>
            <person name="Kolodner R.D."/>
            <person name="LaBaer J."/>
        </authorList>
    </citation>
    <scope>NUCLEOTIDE SEQUENCE [GENOMIC DNA]</scope>
    <source>
        <strain>ATCC 204508 / S288c</strain>
    </source>
</reference>
<reference key="6">
    <citation type="journal article" date="2003" name="Nature">
        <title>Global analysis of protein expression in yeast.</title>
        <authorList>
            <person name="Ghaemmaghami S."/>
            <person name="Huh W.-K."/>
            <person name="Bower K."/>
            <person name="Howson R.W."/>
            <person name="Belle A."/>
            <person name="Dephoure N."/>
            <person name="O'Shea E.K."/>
            <person name="Weissman J.S."/>
        </authorList>
    </citation>
    <scope>LEVEL OF PROTEIN EXPRESSION [LARGE SCALE ANALYSIS]</scope>
</reference>
<gene>
    <name type="primary">INO4</name>
    <name type="ordered locus">YOL108C</name>
    <name type="ORF">HRF151</name>
</gene>
<dbReference type="EMBL" id="J05267">
    <property type="protein sequence ID" value="AAA34707.1"/>
    <property type="molecule type" value="Genomic_DNA"/>
</dbReference>
<dbReference type="EMBL" id="Z48149">
    <property type="protein sequence ID" value="CAA88153.1"/>
    <property type="molecule type" value="Genomic_DNA"/>
</dbReference>
<dbReference type="EMBL" id="Z74850">
    <property type="protein sequence ID" value="CAA99127.1"/>
    <property type="molecule type" value="Genomic_DNA"/>
</dbReference>
<dbReference type="EMBL" id="AY693163">
    <property type="protein sequence ID" value="AAT93182.1"/>
    <property type="molecule type" value="Genomic_DNA"/>
</dbReference>
<dbReference type="EMBL" id="BK006948">
    <property type="protein sequence ID" value="DAA10675.1"/>
    <property type="molecule type" value="Genomic_DNA"/>
</dbReference>
<dbReference type="PIR" id="A35735">
    <property type="entry name" value="A35735"/>
</dbReference>
<dbReference type="RefSeq" id="NP_014533.1">
    <property type="nucleotide sequence ID" value="NM_001183362.1"/>
</dbReference>
<dbReference type="PDB" id="7XQ5">
    <property type="method" value="X-ray"/>
    <property type="resolution" value="2.25 A"/>
    <property type="chains" value="A=40-113"/>
</dbReference>
<dbReference type="PDBsum" id="7XQ5"/>
<dbReference type="SMR" id="P13902"/>
<dbReference type="BioGRID" id="34293">
    <property type="interactions" value="755"/>
</dbReference>
<dbReference type="ComplexPortal" id="CPX-1277">
    <property type="entry name" value="INO2-INO4 transcription activation complex"/>
</dbReference>
<dbReference type="DIP" id="DIP-86N"/>
<dbReference type="FunCoup" id="P13902">
    <property type="interactions" value="1855"/>
</dbReference>
<dbReference type="IntAct" id="P13902">
    <property type="interactions" value="22"/>
</dbReference>
<dbReference type="MINT" id="P13902"/>
<dbReference type="STRING" id="4932.YOL108C"/>
<dbReference type="iPTMnet" id="P13902"/>
<dbReference type="PaxDb" id="4932-YOL108C"/>
<dbReference type="PeptideAtlas" id="P13902"/>
<dbReference type="TopDownProteomics" id="P13902"/>
<dbReference type="EnsemblFungi" id="YOL108C_mRNA">
    <property type="protein sequence ID" value="YOL108C"/>
    <property type="gene ID" value="YOL108C"/>
</dbReference>
<dbReference type="GeneID" id="854042"/>
<dbReference type="KEGG" id="sce:YOL108C"/>
<dbReference type="AGR" id="SGD:S000005468"/>
<dbReference type="SGD" id="S000005468">
    <property type="gene designation" value="INO4"/>
</dbReference>
<dbReference type="VEuPathDB" id="FungiDB:YOL108C"/>
<dbReference type="eggNOG" id="KOG3582">
    <property type="taxonomic scope" value="Eukaryota"/>
</dbReference>
<dbReference type="HOGENOM" id="CLU_145552_0_0_1"/>
<dbReference type="InParanoid" id="P13902"/>
<dbReference type="OMA" id="IPQELIW"/>
<dbReference type="OrthoDB" id="5778525at2759"/>
<dbReference type="BioCyc" id="YEAST:G3O-33505-MONOMER"/>
<dbReference type="BioGRID-ORCS" id="854042">
    <property type="hits" value="5 hits in 10 CRISPR screens"/>
</dbReference>
<dbReference type="PRO" id="PR:P13902"/>
<dbReference type="Proteomes" id="UP000002311">
    <property type="component" value="Chromosome XV"/>
</dbReference>
<dbReference type="RNAct" id="P13902">
    <property type="molecule type" value="protein"/>
</dbReference>
<dbReference type="GO" id="GO:0005634">
    <property type="term" value="C:nucleus"/>
    <property type="evidence" value="ECO:0000314"/>
    <property type="project" value="SGD"/>
</dbReference>
<dbReference type="GO" id="GO:0090575">
    <property type="term" value="C:RNA polymerase II transcription regulator complex"/>
    <property type="evidence" value="ECO:0000314"/>
    <property type="project" value="SGD"/>
</dbReference>
<dbReference type="GO" id="GO:0003677">
    <property type="term" value="F:DNA binding"/>
    <property type="evidence" value="ECO:0007669"/>
    <property type="project" value="UniProtKB-KW"/>
</dbReference>
<dbReference type="GO" id="GO:0046983">
    <property type="term" value="F:protein dimerization activity"/>
    <property type="evidence" value="ECO:0007669"/>
    <property type="project" value="InterPro"/>
</dbReference>
<dbReference type="GO" id="GO:0008654">
    <property type="term" value="P:phospholipid biosynthetic process"/>
    <property type="evidence" value="ECO:0000314"/>
    <property type="project" value="ComplexPortal"/>
</dbReference>
<dbReference type="GO" id="GO:0045944">
    <property type="term" value="P:positive regulation of transcription by RNA polymerase II"/>
    <property type="evidence" value="ECO:0000314"/>
    <property type="project" value="ComplexPortal"/>
</dbReference>
<dbReference type="CDD" id="cd11403">
    <property type="entry name" value="bHLH_scINO4_like"/>
    <property type="match status" value="1"/>
</dbReference>
<dbReference type="FunFam" id="4.10.280.10:FF:000128">
    <property type="entry name" value="Basic helix-loop-helix protein"/>
    <property type="match status" value="1"/>
</dbReference>
<dbReference type="Gene3D" id="4.10.280.10">
    <property type="entry name" value="Helix-loop-helix DNA-binding domain"/>
    <property type="match status" value="1"/>
</dbReference>
<dbReference type="InterPro" id="IPR011598">
    <property type="entry name" value="bHLH_dom"/>
</dbReference>
<dbReference type="InterPro" id="IPR036638">
    <property type="entry name" value="HLH_DNA-bd_sf"/>
</dbReference>
<dbReference type="Pfam" id="PF23181">
    <property type="entry name" value="bHLH_INO4"/>
    <property type="match status" value="1"/>
</dbReference>
<dbReference type="SMART" id="SM00353">
    <property type="entry name" value="HLH"/>
    <property type="match status" value="1"/>
</dbReference>
<dbReference type="SUPFAM" id="SSF47459">
    <property type="entry name" value="HLH, helix-loop-helix DNA-binding domain"/>
    <property type="match status" value="1"/>
</dbReference>
<dbReference type="PROSITE" id="PS50888">
    <property type="entry name" value="BHLH"/>
    <property type="match status" value="1"/>
</dbReference>
<evidence type="ECO:0000250" key="1"/>
<evidence type="ECO:0000255" key="2">
    <source>
        <dbReference type="PROSITE-ProRule" id="PRU00981"/>
    </source>
</evidence>
<evidence type="ECO:0000256" key="3">
    <source>
        <dbReference type="SAM" id="MobiDB-lite"/>
    </source>
</evidence>
<evidence type="ECO:0000269" key="4">
    <source>
    </source>
</evidence>
<evidence type="ECO:0000305" key="5"/>
<evidence type="ECO:0007829" key="6">
    <source>
        <dbReference type="PDB" id="7XQ5"/>
    </source>
</evidence>
<proteinExistence type="evidence at protein level"/>
<accession>P13902</accession>
<accession>D6W1V9</accession>
<comment type="function">
    <text>Transcriptional activator of phospholipid synthetic genes (such as INO1, CHO1/PSS, CHO2/PEM1, OPI3/PEM2, etc.).</text>
</comment>
<comment type="subunit">
    <text evidence="1">Efficient DNA binding requires dimerization with another bHLH protein.</text>
</comment>
<comment type="interaction">
    <interactant intactId="EBI-9270">
        <id>P13902</id>
    </interactant>
    <interactant intactId="EBI-9262">
        <id>P26798</id>
        <label>INO2</label>
    </interactant>
    <organismsDiffer>false</organismsDiffer>
    <experiments>2</experiments>
</comment>
<comment type="subcellular location">
    <subcellularLocation>
        <location evidence="5">Nucleus</location>
    </subcellularLocation>
</comment>
<comment type="miscellaneous">
    <text evidence="4">Present with 521 molecules/cell in log phase SD medium.</text>
</comment>
<sequence length="151" mass="17378">MTNDIKEIQTIQPGLSEIKEIKGELANVKKRKRRSKKINKLTDGQIRINHVSSEKKRRELERAIFDELVAVVPDLQPQESRSELIIYLKSLSYLSWLYERNEKLRKQIIAKHEAKTGSSSSSDPVQEQNGNIRDLVPKELIWELGDGQSGQ</sequence>
<name>INO4_YEAST</name>
<feature type="chain" id="PRO_0000127254" description="Protein INO4">
    <location>
        <begin position="1"/>
        <end position="151"/>
    </location>
</feature>
<feature type="domain" description="bHLH" evidence="2">
    <location>
        <begin position="45"/>
        <end position="97"/>
    </location>
</feature>
<feature type="region of interest" description="Disordered" evidence="3">
    <location>
        <begin position="112"/>
        <end position="137"/>
    </location>
</feature>
<feature type="compositionally biased region" description="Polar residues" evidence="3">
    <location>
        <begin position="116"/>
        <end position="131"/>
    </location>
</feature>
<feature type="helix" evidence="6">
    <location>
        <begin position="43"/>
        <end position="71"/>
    </location>
</feature>
<feature type="helix" evidence="6">
    <location>
        <begin position="77"/>
        <end position="79"/>
    </location>
</feature>
<feature type="helix" evidence="6">
    <location>
        <begin position="83"/>
        <end position="111"/>
    </location>
</feature>
<keyword id="KW-0002">3D-structure</keyword>
<keyword id="KW-0010">Activator</keyword>
<keyword id="KW-0238">DNA-binding</keyword>
<keyword id="KW-0444">Lipid biosynthesis</keyword>
<keyword id="KW-0443">Lipid metabolism</keyword>
<keyword id="KW-0539">Nucleus</keyword>
<keyword id="KW-0594">Phospholipid biosynthesis</keyword>
<keyword id="KW-1208">Phospholipid metabolism</keyword>
<keyword id="KW-1185">Reference proteome</keyword>
<keyword id="KW-0804">Transcription</keyword>
<keyword id="KW-0805">Transcription regulation</keyword>
<protein>
    <recommendedName>
        <fullName>Protein INO4</fullName>
    </recommendedName>
</protein>
<organism>
    <name type="scientific">Saccharomyces cerevisiae (strain ATCC 204508 / S288c)</name>
    <name type="common">Baker's yeast</name>
    <dbReference type="NCBI Taxonomy" id="559292"/>
    <lineage>
        <taxon>Eukaryota</taxon>
        <taxon>Fungi</taxon>
        <taxon>Dikarya</taxon>
        <taxon>Ascomycota</taxon>
        <taxon>Saccharomycotina</taxon>
        <taxon>Saccharomycetes</taxon>
        <taxon>Saccharomycetales</taxon>
        <taxon>Saccharomycetaceae</taxon>
        <taxon>Saccharomyces</taxon>
    </lineage>
</organism>